<evidence type="ECO:0000255" key="1">
    <source>
        <dbReference type="HAMAP-Rule" id="MF_01859"/>
    </source>
</evidence>
<reference key="1">
    <citation type="journal article" date="2010" name="PLoS Genet.">
        <title>Genome sequence of the plant growth promoting endophytic bacterium Enterobacter sp. 638.</title>
        <authorList>
            <person name="Taghavi S."/>
            <person name="van der Lelie D."/>
            <person name="Hoffman A."/>
            <person name="Zhang Y.B."/>
            <person name="Walla M.D."/>
            <person name="Vangronsveld J."/>
            <person name="Newman L."/>
            <person name="Monchy S."/>
        </authorList>
    </citation>
    <scope>NUCLEOTIDE SEQUENCE [LARGE SCALE GENOMIC DNA]</scope>
    <source>
        <strain>638</strain>
    </source>
</reference>
<accession>A4WER8</accession>
<dbReference type="EC" id="2.1.1.174" evidence="1"/>
<dbReference type="EMBL" id="CP000653">
    <property type="protein sequence ID" value="ABP62198.1"/>
    <property type="molecule type" value="Genomic_DNA"/>
</dbReference>
<dbReference type="RefSeq" id="WP_015960524.1">
    <property type="nucleotide sequence ID" value="NC_009436.1"/>
</dbReference>
<dbReference type="SMR" id="A4WER8"/>
<dbReference type="STRING" id="399742.Ent638_3540"/>
<dbReference type="KEGG" id="ent:Ent638_3540"/>
<dbReference type="eggNOG" id="COG2813">
    <property type="taxonomic scope" value="Bacteria"/>
</dbReference>
<dbReference type="HOGENOM" id="CLU_040288_4_0_6"/>
<dbReference type="OrthoDB" id="29650at2"/>
<dbReference type="Proteomes" id="UP000000230">
    <property type="component" value="Chromosome"/>
</dbReference>
<dbReference type="GO" id="GO:0005737">
    <property type="term" value="C:cytoplasm"/>
    <property type="evidence" value="ECO:0007669"/>
    <property type="project" value="UniProtKB-SubCell"/>
</dbReference>
<dbReference type="GO" id="GO:0052916">
    <property type="term" value="F:23S rRNA (guanine(1835)-N(2))-methyltransferase activity"/>
    <property type="evidence" value="ECO:0007669"/>
    <property type="project" value="UniProtKB-EC"/>
</dbReference>
<dbReference type="GO" id="GO:0003676">
    <property type="term" value="F:nucleic acid binding"/>
    <property type="evidence" value="ECO:0007669"/>
    <property type="project" value="InterPro"/>
</dbReference>
<dbReference type="CDD" id="cd02440">
    <property type="entry name" value="AdoMet_MTases"/>
    <property type="match status" value="1"/>
</dbReference>
<dbReference type="FunFam" id="3.40.50.150:FF:000046">
    <property type="entry name" value="Ribosomal RNA large subunit methyltransferase G"/>
    <property type="match status" value="1"/>
</dbReference>
<dbReference type="Gene3D" id="3.40.50.150">
    <property type="entry name" value="Vaccinia Virus protein VP39"/>
    <property type="match status" value="2"/>
</dbReference>
<dbReference type="HAMAP" id="MF_01859">
    <property type="entry name" value="23SrRNA_methyltr_G"/>
    <property type="match status" value="1"/>
</dbReference>
<dbReference type="InterPro" id="IPR002052">
    <property type="entry name" value="DNA_methylase_N6_adenine_CS"/>
</dbReference>
<dbReference type="InterPro" id="IPR017237">
    <property type="entry name" value="rRNA_m2G-MeTrfase_RlmG"/>
</dbReference>
<dbReference type="InterPro" id="IPR046977">
    <property type="entry name" value="RsmC/RlmG"/>
</dbReference>
<dbReference type="InterPro" id="IPR029063">
    <property type="entry name" value="SAM-dependent_MTases_sf"/>
</dbReference>
<dbReference type="InterPro" id="IPR007848">
    <property type="entry name" value="Small_mtfrase_dom"/>
</dbReference>
<dbReference type="NCBIfam" id="NF011577">
    <property type="entry name" value="PRK15001.1"/>
    <property type="match status" value="1"/>
</dbReference>
<dbReference type="PANTHER" id="PTHR47816:SF5">
    <property type="entry name" value="RIBOSOMAL RNA LARGE SUBUNIT METHYLTRANSFERASE G"/>
    <property type="match status" value="1"/>
</dbReference>
<dbReference type="PANTHER" id="PTHR47816">
    <property type="entry name" value="RIBOSOMAL RNA SMALL SUBUNIT METHYLTRANSFERASE C"/>
    <property type="match status" value="1"/>
</dbReference>
<dbReference type="Pfam" id="PF05175">
    <property type="entry name" value="MTS"/>
    <property type="match status" value="1"/>
</dbReference>
<dbReference type="PIRSF" id="PIRSF037565">
    <property type="entry name" value="RRNA_m2G_Mtase_RsmD_prd"/>
    <property type="match status" value="1"/>
</dbReference>
<dbReference type="SUPFAM" id="SSF53335">
    <property type="entry name" value="S-adenosyl-L-methionine-dependent methyltransferases"/>
    <property type="match status" value="1"/>
</dbReference>
<comment type="function">
    <text evidence="1">Specifically methylates the guanine in position 1835 (m2G1835) of 23S rRNA.</text>
</comment>
<comment type="catalytic activity">
    <reaction evidence="1">
        <text>guanosine(1835) in 23S rRNA + S-adenosyl-L-methionine = N(2)-methylguanosine(1835) in 23S rRNA + S-adenosyl-L-homocysteine + H(+)</text>
        <dbReference type="Rhea" id="RHEA:42744"/>
        <dbReference type="Rhea" id="RHEA-COMP:10217"/>
        <dbReference type="Rhea" id="RHEA-COMP:10218"/>
        <dbReference type="ChEBI" id="CHEBI:15378"/>
        <dbReference type="ChEBI" id="CHEBI:57856"/>
        <dbReference type="ChEBI" id="CHEBI:59789"/>
        <dbReference type="ChEBI" id="CHEBI:74269"/>
        <dbReference type="ChEBI" id="CHEBI:74481"/>
        <dbReference type="EC" id="2.1.1.174"/>
    </reaction>
</comment>
<comment type="subcellular location">
    <subcellularLocation>
        <location evidence="1">Cytoplasm</location>
    </subcellularLocation>
</comment>
<comment type="similarity">
    <text evidence="1">Belongs to the methyltransferase superfamily. RlmG family.</text>
</comment>
<feature type="chain" id="PRO_0000366452" description="Ribosomal RNA large subunit methyltransferase G">
    <location>
        <begin position="1"/>
        <end position="378"/>
    </location>
</feature>
<organism>
    <name type="scientific">Enterobacter sp. (strain 638)</name>
    <dbReference type="NCBI Taxonomy" id="399742"/>
    <lineage>
        <taxon>Bacteria</taxon>
        <taxon>Pseudomonadati</taxon>
        <taxon>Pseudomonadota</taxon>
        <taxon>Gammaproteobacteria</taxon>
        <taxon>Enterobacterales</taxon>
        <taxon>Enterobacteriaceae</taxon>
        <taxon>Enterobacter</taxon>
    </lineage>
</organism>
<name>RLMG_ENT38</name>
<proteinExistence type="inferred from homology"/>
<sequence>MSHLDNGFRSLNLKRFPETDDVNPLQAWEAADEYLLQQLDDTEISGPVLVLNDVFGALACALAEHTPYSIGDSYLSELATRENLRHNEIAESSVKFLDSTAEYPQAPGVVLIKIPKTLALLEQQLRALRLVVTPQTRIIAGAKARDIHNSTLELFEKILGTTTTTLAWKKARLINCTFTEPALVDAQQMLSWKLEGTDWTIHNHANVFSRTGLDIGARFFLEHLPGNLEGEIVDLGCGNGVVGLTLLEKNPEASVLFTDESPMAVASSRLNVETNMPEALDRCEFMINNALSGVEPFRFNAVLCNPPFHQQHALTDNVAWEMFHHARRCLKINGELYIVANRHLDYFHKLKKIFGNCTTIATNNKFVVLKAVKLGRTR</sequence>
<keyword id="KW-0963">Cytoplasm</keyword>
<keyword id="KW-0489">Methyltransferase</keyword>
<keyword id="KW-0698">rRNA processing</keyword>
<keyword id="KW-0949">S-adenosyl-L-methionine</keyword>
<keyword id="KW-0808">Transferase</keyword>
<gene>
    <name evidence="1" type="primary">rlmG</name>
    <name type="ordered locus">Ent638_3540</name>
</gene>
<protein>
    <recommendedName>
        <fullName evidence="1">Ribosomal RNA large subunit methyltransferase G</fullName>
        <ecNumber evidence="1">2.1.1.174</ecNumber>
    </recommendedName>
    <alternativeName>
        <fullName evidence="1">23S rRNA m2G1835 methyltransferase</fullName>
    </alternativeName>
    <alternativeName>
        <fullName evidence="1">rRNA (guanine-N(2)-)-methyltransferase RlmG</fullName>
    </alternativeName>
</protein>